<accession>D4ARB8</accession>
<keyword id="KW-1003">Cell membrane</keyword>
<keyword id="KW-0472">Membrane</keyword>
<keyword id="KW-1185">Reference proteome</keyword>
<keyword id="KW-0728">SH3 domain</keyword>
<keyword id="KW-0346">Stress response</keyword>
<keyword id="KW-0812">Transmembrane</keyword>
<keyword id="KW-1133">Transmembrane helix</keyword>
<name>SHO1_ARTBC</name>
<gene>
    <name type="primary">SHO1</name>
    <name type="ORF">ARB_06658</name>
</gene>
<comment type="function">
    <text evidence="1">Plasma membrane osmosensor that activates the high osmolarity glycerol (HOG) MAPK signaling pathway in response to high osmolarity.</text>
</comment>
<comment type="subunit">
    <text evidence="1">Forms homooligomers.</text>
</comment>
<comment type="subcellular location">
    <subcellularLocation>
        <location evidence="1">Cell membrane</location>
        <topology evidence="1">Multi-pass membrane protein</topology>
    </subcellularLocation>
</comment>
<comment type="similarity">
    <text evidence="5">Belongs to the SHO1 family.</text>
</comment>
<feature type="chain" id="PRO_0000410355" description="High osmolarity signaling protein SHO1">
    <location>
        <begin position="1"/>
        <end position="285"/>
    </location>
</feature>
<feature type="topological domain" description="Cytoplasmic" evidence="2">
    <location>
        <begin position="1"/>
        <end position="12"/>
    </location>
</feature>
<feature type="transmembrane region" description="Helical" evidence="2">
    <location>
        <begin position="13"/>
        <end position="33"/>
    </location>
</feature>
<feature type="topological domain" description="Extracellular" evidence="2">
    <location>
        <begin position="34"/>
        <end position="44"/>
    </location>
</feature>
<feature type="transmembrane region" description="Helical" evidence="2">
    <location>
        <begin position="45"/>
        <end position="65"/>
    </location>
</feature>
<feature type="topological domain" description="Cytoplasmic" evidence="2">
    <location>
        <begin position="66"/>
        <end position="70"/>
    </location>
</feature>
<feature type="transmembrane region" description="Helical" evidence="2">
    <location>
        <begin position="71"/>
        <end position="91"/>
    </location>
</feature>
<feature type="topological domain" description="Extracellular" evidence="2">
    <location>
        <begin position="92"/>
        <end position="103"/>
    </location>
</feature>
<feature type="transmembrane region" description="Helical" evidence="2">
    <location>
        <begin position="104"/>
        <end position="124"/>
    </location>
</feature>
<feature type="topological domain" description="Cytoplasmic" evidence="2">
    <location>
        <begin position="125"/>
        <end position="285"/>
    </location>
</feature>
<feature type="domain" description="SH3" evidence="3">
    <location>
        <begin position="226"/>
        <end position="285"/>
    </location>
</feature>
<feature type="region of interest" description="Disordered" evidence="4">
    <location>
        <begin position="141"/>
        <end position="170"/>
    </location>
</feature>
<feature type="compositionally biased region" description="Polar residues" evidence="4">
    <location>
        <begin position="147"/>
        <end position="168"/>
    </location>
</feature>
<reference key="1">
    <citation type="journal article" date="2011" name="Genome Biol.">
        <title>Comparative and functional genomics provide insights into the pathogenicity of dermatophytic fungi.</title>
        <authorList>
            <person name="Burmester A."/>
            <person name="Shelest E."/>
            <person name="Gloeckner G."/>
            <person name="Heddergott C."/>
            <person name="Schindler S."/>
            <person name="Staib P."/>
            <person name="Heidel A."/>
            <person name="Felder M."/>
            <person name="Petzold A."/>
            <person name="Szafranski K."/>
            <person name="Feuermann M."/>
            <person name="Pedruzzi I."/>
            <person name="Priebe S."/>
            <person name="Groth M."/>
            <person name="Winkler R."/>
            <person name="Li W."/>
            <person name="Kniemeyer O."/>
            <person name="Schroeckh V."/>
            <person name="Hertweck C."/>
            <person name="Hube B."/>
            <person name="White T.C."/>
            <person name="Platzer M."/>
            <person name="Guthke R."/>
            <person name="Heitman J."/>
            <person name="Woestemeyer J."/>
            <person name="Zipfel P.F."/>
            <person name="Monod M."/>
            <person name="Brakhage A.A."/>
        </authorList>
    </citation>
    <scope>NUCLEOTIDE SEQUENCE [LARGE SCALE GENOMIC DNA]</scope>
    <source>
        <strain>ATCC MYA-4681 / CBS 112371</strain>
    </source>
</reference>
<sequence>MARFQMSNLVGDPFALATVSIGMLAWIIGVVSCSIAHTKEVVPNFFWWSIAYQLCVLVGVAVVMGSNTSHIYGTAVVGYAAAGLVCTTFTLDSLVTSKQGARQSAGAGLILLAMTDIVWIFYFGSTSQSGPRAYIDSFAPHKEQPHSYRNSKPISHSYTPRPETTVSSAHPHMYSSAPLSGFETSSPMTGFNPAAASTTGLQPVLGSQTNASTVGGETGEVGQPTEYPYRAKAIYSYEANPDDANEISFTKHEILEVSDVSGRWWQAKKSTGETGIAPSNYLILL</sequence>
<protein>
    <recommendedName>
        <fullName>High osmolarity signaling protein SHO1</fullName>
    </recommendedName>
    <alternativeName>
        <fullName>Osmosensor SHO1</fullName>
    </alternativeName>
</protein>
<proteinExistence type="inferred from homology"/>
<evidence type="ECO:0000250" key="1"/>
<evidence type="ECO:0000255" key="2"/>
<evidence type="ECO:0000255" key="3">
    <source>
        <dbReference type="PROSITE-ProRule" id="PRU00192"/>
    </source>
</evidence>
<evidence type="ECO:0000256" key="4">
    <source>
        <dbReference type="SAM" id="MobiDB-lite"/>
    </source>
</evidence>
<evidence type="ECO:0000305" key="5"/>
<dbReference type="EMBL" id="ABSU01000006">
    <property type="protein sequence ID" value="EFE34261.1"/>
    <property type="molecule type" value="Genomic_DNA"/>
</dbReference>
<dbReference type="RefSeq" id="XP_003014901.1">
    <property type="nucleotide sequence ID" value="XM_003014855.1"/>
</dbReference>
<dbReference type="SMR" id="D4ARB8"/>
<dbReference type="STRING" id="663331.D4ARB8"/>
<dbReference type="GeneID" id="9527204"/>
<dbReference type="KEGG" id="abe:ARB_06658"/>
<dbReference type="eggNOG" id="ENOG502QW7A">
    <property type="taxonomic scope" value="Eukaryota"/>
</dbReference>
<dbReference type="HOGENOM" id="CLU_043316_1_0_1"/>
<dbReference type="OMA" id="NIVWIFY"/>
<dbReference type="OrthoDB" id="5983572at2759"/>
<dbReference type="Proteomes" id="UP000008866">
    <property type="component" value="Unassembled WGS sequence"/>
</dbReference>
<dbReference type="GO" id="GO:0005886">
    <property type="term" value="C:plasma membrane"/>
    <property type="evidence" value="ECO:0007669"/>
    <property type="project" value="UniProtKB-SubCell"/>
</dbReference>
<dbReference type="CDD" id="cd11855">
    <property type="entry name" value="SH3_Sho1p"/>
    <property type="match status" value="1"/>
</dbReference>
<dbReference type="FunFam" id="2.30.30.40:FF:000213">
    <property type="entry name" value="High osmolarity signaling protein SHO1"/>
    <property type="match status" value="1"/>
</dbReference>
<dbReference type="Gene3D" id="2.30.30.40">
    <property type="entry name" value="SH3 Domains"/>
    <property type="match status" value="1"/>
</dbReference>
<dbReference type="InterPro" id="IPR036028">
    <property type="entry name" value="SH3-like_dom_sf"/>
</dbReference>
<dbReference type="InterPro" id="IPR001452">
    <property type="entry name" value="SH3_domain"/>
</dbReference>
<dbReference type="InterPro" id="IPR035522">
    <property type="entry name" value="Sho1_SH3"/>
</dbReference>
<dbReference type="Pfam" id="PF00018">
    <property type="entry name" value="SH3_1"/>
    <property type="match status" value="1"/>
</dbReference>
<dbReference type="PRINTS" id="PR00452">
    <property type="entry name" value="SH3DOMAIN"/>
</dbReference>
<dbReference type="SMART" id="SM00326">
    <property type="entry name" value="SH3"/>
    <property type="match status" value="1"/>
</dbReference>
<dbReference type="SUPFAM" id="SSF50044">
    <property type="entry name" value="SH3-domain"/>
    <property type="match status" value="1"/>
</dbReference>
<dbReference type="PROSITE" id="PS50002">
    <property type="entry name" value="SH3"/>
    <property type="match status" value="1"/>
</dbReference>
<organism>
    <name type="scientific">Arthroderma benhamiae (strain ATCC MYA-4681 / CBS 112371)</name>
    <name type="common">Trichophyton mentagrophytes</name>
    <dbReference type="NCBI Taxonomy" id="663331"/>
    <lineage>
        <taxon>Eukaryota</taxon>
        <taxon>Fungi</taxon>
        <taxon>Dikarya</taxon>
        <taxon>Ascomycota</taxon>
        <taxon>Pezizomycotina</taxon>
        <taxon>Eurotiomycetes</taxon>
        <taxon>Eurotiomycetidae</taxon>
        <taxon>Onygenales</taxon>
        <taxon>Arthrodermataceae</taxon>
        <taxon>Trichophyton</taxon>
    </lineage>
</organism>